<comment type="function">
    <text evidence="1">Catalyzes the stereospecific hydrolysis of the cyclic amide bond of D-hydantoin derivatives with an aromatic side chains at the 5'-position. Has no activity on dihydropyrimidines. The physiological function is unknown.</text>
</comment>
<comment type="catalytic activity">
    <reaction evidence="1">
        <text>D-5-phenylhydantoin + H2O = N-carbamoyl-D-phenylglycine + H(+)</text>
        <dbReference type="Rhea" id="RHEA:51664"/>
        <dbReference type="ChEBI" id="CHEBI:15377"/>
        <dbReference type="ChEBI" id="CHEBI:15378"/>
        <dbReference type="ChEBI" id="CHEBI:140750"/>
        <dbReference type="ChEBI" id="CHEBI:140758"/>
    </reaction>
</comment>
<comment type="cofactor">
    <cofactor evidence="1">
        <name>a divalent metal cation</name>
        <dbReference type="ChEBI" id="CHEBI:60240"/>
    </cofactor>
    <text evidence="1">Binds 2 divalent metal cations per subunit.</text>
</comment>
<comment type="subunit">
    <text evidence="1">Homotetramer.</text>
</comment>
<comment type="PTM">
    <text evidence="1">Carboxylation allows a single lysine to coordinate two divalent metal cations.</text>
</comment>
<comment type="similarity">
    <text evidence="1">Belongs to the metallo-dependent hydrolases superfamily. Hydantoinase/dihydropyrimidinase family.</text>
</comment>
<protein>
    <recommendedName>
        <fullName evidence="1">D-phenylhydantoinase</fullName>
        <ecNumber evidence="1">3.5.2.-</ecNumber>
    </recommendedName>
    <alternativeName>
        <fullName evidence="1">Hydantoin-utilizing enzyme HyuA</fullName>
    </alternativeName>
</protein>
<keyword id="KW-0378">Hydrolase</keyword>
<keyword id="KW-0479">Metal-binding</keyword>
<accession>A8A415</accession>
<dbReference type="EC" id="3.5.2.-" evidence="1"/>
<dbReference type="EMBL" id="CP000802">
    <property type="protein sequence ID" value="ABV07269.1"/>
    <property type="molecule type" value="Genomic_DNA"/>
</dbReference>
<dbReference type="RefSeq" id="WP_012135969.1">
    <property type="nucleotide sequence ID" value="NC_009800.1"/>
</dbReference>
<dbReference type="SMR" id="A8A415"/>
<dbReference type="KEGG" id="ecx:EcHS_A3033"/>
<dbReference type="HOGENOM" id="CLU_015572_2_0_6"/>
<dbReference type="GO" id="GO:0005829">
    <property type="term" value="C:cytosol"/>
    <property type="evidence" value="ECO:0007669"/>
    <property type="project" value="TreeGrafter"/>
</dbReference>
<dbReference type="GO" id="GO:0016812">
    <property type="term" value="F:hydrolase activity, acting on carbon-nitrogen (but not peptide) bonds, in cyclic amides"/>
    <property type="evidence" value="ECO:0007669"/>
    <property type="project" value="UniProtKB-UniRule"/>
</dbReference>
<dbReference type="GO" id="GO:0046872">
    <property type="term" value="F:metal ion binding"/>
    <property type="evidence" value="ECO:0007669"/>
    <property type="project" value="UniProtKB-KW"/>
</dbReference>
<dbReference type="GO" id="GO:0006208">
    <property type="term" value="P:pyrimidine nucleobase catabolic process"/>
    <property type="evidence" value="ECO:0007669"/>
    <property type="project" value="InterPro"/>
</dbReference>
<dbReference type="CDD" id="cd01314">
    <property type="entry name" value="D-HYD"/>
    <property type="match status" value="1"/>
</dbReference>
<dbReference type="FunFam" id="3.20.20.140:FF:000026">
    <property type="entry name" value="D-phenylhydantoinase"/>
    <property type="match status" value="1"/>
</dbReference>
<dbReference type="Gene3D" id="3.20.20.140">
    <property type="entry name" value="Metal-dependent hydrolases"/>
    <property type="match status" value="1"/>
</dbReference>
<dbReference type="Gene3D" id="2.30.40.10">
    <property type="entry name" value="Urease, subunit C, domain 1"/>
    <property type="match status" value="1"/>
</dbReference>
<dbReference type="HAMAP" id="MF_01644">
    <property type="entry name" value="D_hydantoinase"/>
    <property type="match status" value="1"/>
</dbReference>
<dbReference type="InterPro" id="IPR006680">
    <property type="entry name" value="Amidohydro-rel"/>
</dbReference>
<dbReference type="InterPro" id="IPR023766">
    <property type="entry name" value="D_phenylhydantoinase"/>
</dbReference>
<dbReference type="InterPro" id="IPR011778">
    <property type="entry name" value="Hydantoinase/dihydroPyrase"/>
</dbReference>
<dbReference type="InterPro" id="IPR011059">
    <property type="entry name" value="Metal-dep_hydrolase_composite"/>
</dbReference>
<dbReference type="InterPro" id="IPR032466">
    <property type="entry name" value="Metal_Hydrolase"/>
</dbReference>
<dbReference type="InterPro" id="IPR050378">
    <property type="entry name" value="Metallo-dep_Hydrolases_sf"/>
</dbReference>
<dbReference type="NCBIfam" id="TIGR02033">
    <property type="entry name" value="D-hydantoinase"/>
    <property type="match status" value="1"/>
</dbReference>
<dbReference type="PANTHER" id="PTHR11647:SF1">
    <property type="entry name" value="COLLAPSIN RESPONSE MEDIATOR PROTEIN"/>
    <property type="match status" value="1"/>
</dbReference>
<dbReference type="PANTHER" id="PTHR11647">
    <property type="entry name" value="HYDRANTOINASE/DIHYDROPYRIMIDINASE FAMILY MEMBER"/>
    <property type="match status" value="1"/>
</dbReference>
<dbReference type="Pfam" id="PF01979">
    <property type="entry name" value="Amidohydro_1"/>
    <property type="match status" value="1"/>
</dbReference>
<dbReference type="SUPFAM" id="SSF51338">
    <property type="entry name" value="Composite domain of metallo-dependent hydrolases"/>
    <property type="match status" value="2"/>
</dbReference>
<dbReference type="SUPFAM" id="SSF51556">
    <property type="entry name" value="Metallo-dependent hydrolases"/>
    <property type="match status" value="1"/>
</dbReference>
<gene>
    <name evidence="1" type="primary">hyuA</name>
    <name type="ordered locus">EcHS_A3033</name>
</gene>
<sequence>MRVLIKNGTVVNADGQAKQDLLIESGIVRQLGNNISPQLPYEEIDATGCYVFPGGVDVHTHFNIDVGIARSCDDFFTGTRAAACGGTTTIIDHMGFGPNGCRLRHQLEVYRGYAAHKAVIDYSFHGVIQHINHAILDEIPMMAEEGLSSFKLYLTYQYKLNDDEVLQALRRLHESGALTTVHPENDAAIASKRAEFIAAGLTAPRYHALSRPLECEAEAIARMINLAQIAGNAPLYIVHLSNGLGLDYLRLARANHQPVWVETCPQYLLLDERSYDTEDGMKFILSPPLRNVREQDKLWCGISDGAIDVVATDHCTFSMAQRLQISKGDFSRCPNGLPGVENRMQLLFSSGVMTGRITPERFVELTSAMPARLFGLWPQKGLLAPGSDGDVVIIDPRQSQQIQHRHLHDNADYSPWEGFTCQGAIVRTLSRGETIFCDGTFTGKAGRGRFLRRKPFVPPVL</sequence>
<evidence type="ECO:0000255" key="1">
    <source>
        <dbReference type="HAMAP-Rule" id="MF_01644"/>
    </source>
</evidence>
<feature type="chain" id="PRO_0000317651" description="D-phenylhydantoinase">
    <location>
        <begin position="1"/>
        <end position="461"/>
    </location>
</feature>
<feature type="binding site" evidence="1">
    <location>
        <position position="59"/>
    </location>
    <ligand>
        <name>a divalent metal cation</name>
        <dbReference type="ChEBI" id="CHEBI:60240"/>
        <label>1</label>
    </ligand>
</feature>
<feature type="binding site" evidence="1">
    <location>
        <position position="61"/>
    </location>
    <ligand>
        <name>a divalent metal cation</name>
        <dbReference type="ChEBI" id="CHEBI:60240"/>
        <label>1</label>
    </ligand>
</feature>
<feature type="binding site" description="via carbamate group" evidence="1">
    <location>
        <position position="151"/>
    </location>
    <ligand>
        <name>a divalent metal cation</name>
        <dbReference type="ChEBI" id="CHEBI:60240"/>
        <label>1</label>
    </ligand>
</feature>
<feature type="binding site" description="via carbamate group" evidence="1">
    <location>
        <position position="151"/>
    </location>
    <ligand>
        <name>a divalent metal cation</name>
        <dbReference type="ChEBI" id="CHEBI:60240"/>
        <label>2</label>
    </ligand>
</feature>
<feature type="binding site" evidence="1">
    <location>
        <position position="156"/>
    </location>
    <ligand>
        <name>substrate</name>
    </ligand>
</feature>
<feature type="binding site" evidence="1">
    <location>
        <position position="182"/>
    </location>
    <ligand>
        <name>a divalent metal cation</name>
        <dbReference type="ChEBI" id="CHEBI:60240"/>
        <label>2</label>
    </ligand>
</feature>
<feature type="binding site" evidence="1">
    <location>
        <position position="239"/>
    </location>
    <ligand>
        <name>a divalent metal cation</name>
        <dbReference type="ChEBI" id="CHEBI:60240"/>
        <label>2</label>
    </ligand>
</feature>
<feature type="binding site" evidence="1">
    <location>
        <position position="286"/>
    </location>
    <ligand>
        <name>substrate</name>
    </ligand>
</feature>
<feature type="binding site" evidence="1">
    <location>
        <position position="313"/>
    </location>
    <ligand>
        <name>a divalent metal cation</name>
        <dbReference type="ChEBI" id="CHEBI:60240"/>
        <label>1</label>
    </ligand>
</feature>
<feature type="binding site" evidence="1">
    <location>
        <position position="335"/>
    </location>
    <ligand>
        <name>substrate</name>
    </ligand>
</feature>
<feature type="modified residue" description="N6-carboxylysine" evidence="1">
    <location>
        <position position="151"/>
    </location>
</feature>
<name>PHYDA_ECOHS</name>
<organism>
    <name type="scientific">Escherichia coli O9:H4 (strain HS)</name>
    <dbReference type="NCBI Taxonomy" id="331112"/>
    <lineage>
        <taxon>Bacteria</taxon>
        <taxon>Pseudomonadati</taxon>
        <taxon>Pseudomonadota</taxon>
        <taxon>Gammaproteobacteria</taxon>
        <taxon>Enterobacterales</taxon>
        <taxon>Enterobacteriaceae</taxon>
        <taxon>Escherichia</taxon>
    </lineage>
</organism>
<proteinExistence type="inferred from homology"/>
<reference key="1">
    <citation type="journal article" date="2008" name="J. Bacteriol.">
        <title>The pangenome structure of Escherichia coli: comparative genomic analysis of E. coli commensal and pathogenic isolates.</title>
        <authorList>
            <person name="Rasko D.A."/>
            <person name="Rosovitz M.J."/>
            <person name="Myers G.S.A."/>
            <person name="Mongodin E.F."/>
            <person name="Fricke W.F."/>
            <person name="Gajer P."/>
            <person name="Crabtree J."/>
            <person name="Sebaihia M."/>
            <person name="Thomson N.R."/>
            <person name="Chaudhuri R."/>
            <person name="Henderson I.R."/>
            <person name="Sperandio V."/>
            <person name="Ravel J."/>
        </authorList>
    </citation>
    <scope>NUCLEOTIDE SEQUENCE [LARGE SCALE GENOMIC DNA]</scope>
    <source>
        <strain>HS</strain>
    </source>
</reference>